<evidence type="ECO:0000255" key="1">
    <source>
        <dbReference type="HAMAP-Rule" id="MF_01014"/>
    </source>
</evidence>
<dbReference type="EC" id="5.3.1.16" evidence="1"/>
<dbReference type="EMBL" id="BX569691">
    <property type="protein sequence ID" value="CAE07288.1"/>
    <property type="molecule type" value="Genomic_DNA"/>
</dbReference>
<dbReference type="RefSeq" id="WP_011127638.1">
    <property type="nucleotide sequence ID" value="NC_005070.1"/>
</dbReference>
<dbReference type="SMR" id="Q7U851"/>
<dbReference type="STRING" id="84588.SYNW0773"/>
<dbReference type="KEGG" id="syw:SYNW0773"/>
<dbReference type="eggNOG" id="COG0106">
    <property type="taxonomic scope" value="Bacteria"/>
</dbReference>
<dbReference type="HOGENOM" id="CLU_048577_1_1_3"/>
<dbReference type="UniPathway" id="UPA00031">
    <property type="reaction ID" value="UER00009"/>
</dbReference>
<dbReference type="Proteomes" id="UP000001422">
    <property type="component" value="Chromosome"/>
</dbReference>
<dbReference type="GO" id="GO:0005737">
    <property type="term" value="C:cytoplasm"/>
    <property type="evidence" value="ECO:0007669"/>
    <property type="project" value="UniProtKB-SubCell"/>
</dbReference>
<dbReference type="GO" id="GO:0003949">
    <property type="term" value="F:1-(5-phosphoribosyl)-5-[(5-phosphoribosylamino)methylideneamino]imidazole-4-carboxamide isomerase activity"/>
    <property type="evidence" value="ECO:0007669"/>
    <property type="project" value="UniProtKB-UniRule"/>
</dbReference>
<dbReference type="GO" id="GO:0000105">
    <property type="term" value="P:L-histidine biosynthetic process"/>
    <property type="evidence" value="ECO:0007669"/>
    <property type="project" value="UniProtKB-UniRule"/>
</dbReference>
<dbReference type="GO" id="GO:0000162">
    <property type="term" value="P:L-tryptophan biosynthetic process"/>
    <property type="evidence" value="ECO:0007669"/>
    <property type="project" value="TreeGrafter"/>
</dbReference>
<dbReference type="CDD" id="cd04732">
    <property type="entry name" value="HisA"/>
    <property type="match status" value="1"/>
</dbReference>
<dbReference type="FunFam" id="3.20.20.70:FF:000009">
    <property type="entry name" value="1-(5-phosphoribosyl)-5-[(5-phosphoribosylamino)methylideneamino] imidazole-4-carboxamide isomerase"/>
    <property type="match status" value="1"/>
</dbReference>
<dbReference type="Gene3D" id="3.20.20.70">
    <property type="entry name" value="Aldolase class I"/>
    <property type="match status" value="1"/>
</dbReference>
<dbReference type="HAMAP" id="MF_01014">
    <property type="entry name" value="HisA"/>
    <property type="match status" value="1"/>
</dbReference>
<dbReference type="InterPro" id="IPR013785">
    <property type="entry name" value="Aldolase_TIM"/>
</dbReference>
<dbReference type="InterPro" id="IPR006062">
    <property type="entry name" value="His_biosynth"/>
</dbReference>
<dbReference type="InterPro" id="IPR006063">
    <property type="entry name" value="HisA_bact_arch"/>
</dbReference>
<dbReference type="InterPro" id="IPR044524">
    <property type="entry name" value="Isoase_HisA-like"/>
</dbReference>
<dbReference type="InterPro" id="IPR023016">
    <property type="entry name" value="Isoase_HisA-like_bact"/>
</dbReference>
<dbReference type="InterPro" id="IPR011060">
    <property type="entry name" value="RibuloseP-bd_barrel"/>
</dbReference>
<dbReference type="NCBIfam" id="TIGR00007">
    <property type="entry name" value="1-(5-phosphoribosyl)-5-[(5-phosphoribosylamino)methylideneamino]imidazole-4-carboxamide isomerase"/>
    <property type="match status" value="1"/>
</dbReference>
<dbReference type="NCBIfam" id="NF010112">
    <property type="entry name" value="PRK13585.1"/>
    <property type="match status" value="1"/>
</dbReference>
<dbReference type="PANTHER" id="PTHR43090">
    <property type="entry name" value="1-(5-PHOSPHORIBOSYL)-5-[(5-PHOSPHORIBOSYLAMINO)METHYLIDENEAMINO] IMIDAZOLE-4-CARBOXAMIDE ISOMERASE"/>
    <property type="match status" value="1"/>
</dbReference>
<dbReference type="PANTHER" id="PTHR43090:SF2">
    <property type="entry name" value="1-(5-PHOSPHORIBOSYL)-5-[(5-PHOSPHORIBOSYLAMINO)METHYLIDENEAMINO] IMIDAZOLE-4-CARBOXAMIDE ISOMERASE"/>
    <property type="match status" value="1"/>
</dbReference>
<dbReference type="Pfam" id="PF00977">
    <property type="entry name" value="His_biosynth"/>
    <property type="match status" value="1"/>
</dbReference>
<dbReference type="SUPFAM" id="SSF51366">
    <property type="entry name" value="Ribulose-phoshate binding barrel"/>
    <property type="match status" value="1"/>
</dbReference>
<accession>Q7U851</accession>
<sequence>MEILPAIDLLDGACVRLHKGDYEQVTRFSDDPVAQALSWQQQGATRLHLVDLDGAKRGEPVNDSAVQAITSALDIPVQLGGGVRSLERAEQLLACGLDRVILGTVAIEQPDLVRSLAERYPGRIVVGIDAKDGRVATRGWIEQSDVLATDLARTFSSSGIAAIITTDIATDGTLAGPNLEALRTMAASSSVPVIASGGIGCMADLLSLLPLEPLGVSGVIVGRALYDGRVDLAEAVRALAEPRLQDITAVAADLA</sequence>
<comment type="catalytic activity">
    <reaction evidence="1">
        <text>1-(5-phospho-beta-D-ribosyl)-5-[(5-phospho-beta-D-ribosylamino)methylideneamino]imidazole-4-carboxamide = 5-[(5-phospho-1-deoxy-D-ribulos-1-ylimino)methylamino]-1-(5-phospho-beta-D-ribosyl)imidazole-4-carboxamide</text>
        <dbReference type="Rhea" id="RHEA:15469"/>
        <dbReference type="ChEBI" id="CHEBI:58435"/>
        <dbReference type="ChEBI" id="CHEBI:58525"/>
        <dbReference type="EC" id="5.3.1.16"/>
    </reaction>
</comment>
<comment type="pathway">
    <text evidence="1">Amino-acid biosynthesis; L-histidine biosynthesis; L-histidine from 5-phospho-alpha-D-ribose 1-diphosphate: step 4/9.</text>
</comment>
<comment type="subcellular location">
    <subcellularLocation>
        <location evidence="1">Cytoplasm</location>
    </subcellularLocation>
</comment>
<comment type="similarity">
    <text evidence="1">Belongs to the HisA/HisF family.</text>
</comment>
<feature type="chain" id="PRO_0000142065" description="1-(5-phosphoribosyl)-5-[(5-phosphoribosylamino)methylideneamino] imidazole-4-carboxamide isomerase">
    <location>
        <begin position="1"/>
        <end position="255"/>
    </location>
</feature>
<feature type="active site" description="Proton acceptor" evidence="1">
    <location>
        <position position="8"/>
    </location>
</feature>
<feature type="active site" description="Proton donor" evidence="1">
    <location>
        <position position="129"/>
    </location>
</feature>
<proteinExistence type="inferred from homology"/>
<protein>
    <recommendedName>
        <fullName evidence="1">1-(5-phosphoribosyl)-5-[(5-phosphoribosylamino)methylideneamino] imidazole-4-carboxamide isomerase</fullName>
        <ecNumber evidence="1">5.3.1.16</ecNumber>
    </recommendedName>
    <alternativeName>
        <fullName evidence="1">Phosphoribosylformimino-5-aminoimidazole carboxamide ribotide isomerase</fullName>
    </alternativeName>
</protein>
<name>HIS4_PARMW</name>
<keyword id="KW-0028">Amino-acid biosynthesis</keyword>
<keyword id="KW-0963">Cytoplasm</keyword>
<keyword id="KW-0368">Histidine biosynthesis</keyword>
<keyword id="KW-0413">Isomerase</keyword>
<organism>
    <name type="scientific">Parasynechococcus marenigrum (strain WH8102)</name>
    <dbReference type="NCBI Taxonomy" id="84588"/>
    <lineage>
        <taxon>Bacteria</taxon>
        <taxon>Bacillati</taxon>
        <taxon>Cyanobacteriota</taxon>
        <taxon>Cyanophyceae</taxon>
        <taxon>Synechococcales</taxon>
        <taxon>Prochlorococcaceae</taxon>
        <taxon>Parasynechococcus</taxon>
        <taxon>Parasynechococcus marenigrum</taxon>
    </lineage>
</organism>
<reference key="1">
    <citation type="journal article" date="2003" name="Nature">
        <title>The genome of a motile marine Synechococcus.</title>
        <authorList>
            <person name="Palenik B."/>
            <person name="Brahamsha B."/>
            <person name="Larimer F.W."/>
            <person name="Land M.L."/>
            <person name="Hauser L."/>
            <person name="Chain P."/>
            <person name="Lamerdin J.E."/>
            <person name="Regala W."/>
            <person name="Allen E.E."/>
            <person name="McCarren J."/>
            <person name="Paulsen I.T."/>
            <person name="Dufresne A."/>
            <person name="Partensky F."/>
            <person name="Webb E.A."/>
            <person name="Waterbury J."/>
        </authorList>
    </citation>
    <scope>NUCLEOTIDE SEQUENCE [LARGE SCALE GENOMIC DNA]</scope>
    <source>
        <strain>WH8102</strain>
    </source>
</reference>
<gene>
    <name evidence="1" type="primary">hisA</name>
    <name type="ordered locus">SYNW0773</name>
</gene>